<organism>
    <name type="scientific">Neisseria meningitidis serogroup C / serotype 2a (strain ATCC 700532 / DSM 15464 / FAM18)</name>
    <dbReference type="NCBI Taxonomy" id="272831"/>
    <lineage>
        <taxon>Bacteria</taxon>
        <taxon>Pseudomonadati</taxon>
        <taxon>Pseudomonadota</taxon>
        <taxon>Betaproteobacteria</taxon>
        <taxon>Neisseriales</taxon>
        <taxon>Neisseriaceae</taxon>
        <taxon>Neisseria</taxon>
    </lineage>
</organism>
<keyword id="KW-0378">Hydrolase</keyword>
<keyword id="KW-0479">Metal-binding</keyword>
<keyword id="KW-0862">Zinc</keyword>
<sequence length="252" mass="28114">MKITPVKALTDNYIWMIQHGNHAVCVDPSEPSPVLEFLVRNRLMLAQTWVTHPHPDHEGGAAALWRGYMESPVYGESDIEAATHTVTAGTQFTFGDGQVTVWATPGHTDRHTSYLLETSDGIHVFCGDTLFSAGCGRVFTGTIEQLYDSFQRFNRLPENTLFYPAHEYTAANLDFAAHIEPDNADIQTALKAAAHTPTLPVTLAHERRVNPFLRVDLPHVRDRAEALSGKTLNSSLDTFVALRELKNQYRTK</sequence>
<protein>
    <recommendedName>
        <fullName evidence="1">Hydroxyacylglutathione hydrolase</fullName>
        <ecNumber evidence="1">3.1.2.6</ecNumber>
    </recommendedName>
    <alternativeName>
        <fullName evidence="1">Glyoxalase II</fullName>
        <shortName evidence="1">Glx II</shortName>
    </alternativeName>
</protein>
<name>GLO2_NEIMF</name>
<accession>A1KW76</accession>
<feature type="chain" id="PRO_0000309665" description="Hydroxyacylglutathione hydrolase">
    <location>
        <begin position="1"/>
        <end position="252"/>
    </location>
</feature>
<feature type="binding site" evidence="1">
    <location>
        <position position="52"/>
    </location>
    <ligand>
        <name>Zn(2+)</name>
        <dbReference type="ChEBI" id="CHEBI:29105"/>
        <label>1</label>
    </ligand>
</feature>
<feature type="binding site" evidence="1">
    <location>
        <position position="54"/>
    </location>
    <ligand>
        <name>Zn(2+)</name>
        <dbReference type="ChEBI" id="CHEBI:29105"/>
        <label>1</label>
    </ligand>
</feature>
<feature type="binding site" evidence="1">
    <location>
        <position position="56"/>
    </location>
    <ligand>
        <name>Zn(2+)</name>
        <dbReference type="ChEBI" id="CHEBI:29105"/>
        <label>2</label>
    </ligand>
</feature>
<feature type="binding site" evidence="1">
    <location>
        <position position="57"/>
    </location>
    <ligand>
        <name>Zn(2+)</name>
        <dbReference type="ChEBI" id="CHEBI:29105"/>
        <label>2</label>
    </ligand>
</feature>
<feature type="binding site" evidence="1">
    <location>
        <position position="107"/>
    </location>
    <ligand>
        <name>Zn(2+)</name>
        <dbReference type="ChEBI" id="CHEBI:29105"/>
        <label>1</label>
    </ligand>
</feature>
<feature type="binding site" evidence="1">
    <location>
        <position position="128"/>
    </location>
    <ligand>
        <name>Zn(2+)</name>
        <dbReference type="ChEBI" id="CHEBI:29105"/>
        <label>1</label>
    </ligand>
</feature>
<feature type="binding site" evidence="1">
    <location>
        <position position="128"/>
    </location>
    <ligand>
        <name>Zn(2+)</name>
        <dbReference type="ChEBI" id="CHEBI:29105"/>
        <label>2</label>
    </ligand>
</feature>
<feature type="binding site" evidence="1">
    <location>
        <position position="166"/>
    </location>
    <ligand>
        <name>Zn(2+)</name>
        <dbReference type="ChEBI" id="CHEBI:29105"/>
        <label>2</label>
    </ligand>
</feature>
<comment type="function">
    <text evidence="1">Thiolesterase that catalyzes the hydrolysis of S-D-lactoyl-glutathione to form glutathione and D-lactic acid.</text>
</comment>
<comment type="catalytic activity">
    <reaction evidence="1">
        <text>an S-(2-hydroxyacyl)glutathione + H2O = a 2-hydroxy carboxylate + glutathione + H(+)</text>
        <dbReference type="Rhea" id="RHEA:21864"/>
        <dbReference type="ChEBI" id="CHEBI:15377"/>
        <dbReference type="ChEBI" id="CHEBI:15378"/>
        <dbReference type="ChEBI" id="CHEBI:57925"/>
        <dbReference type="ChEBI" id="CHEBI:58896"/>
        <dbReference type="ChEBI" id="CHEBI:71261"/>
        <dbReference type="EC" id="3.1.2.6"/>
    </reaction>
</comment>
<comment type="cofactor">
    <cofactor evidence="1">
        <name>Zn(2+)</name>
        <dbReference type="ChEBI" id="CHEBI:29105"/>
    </cofactor>
    <text evidence="1">Binds 2 Zn(2+) ions per subunit.</text>
</comment>
<comment type="pathway">
    <text evidence="1">Secondary metabolite metabolism; methylglyoxal degradation; (R)-lactate from methylglyoxal: step 2/2.</text>
</comment>
<comment type="subunit">
    <text evidence="1">Monomer.</text>
</comment>
<comment type="similarity">
    <text evidence="1">Belongs to the metallo-beta-lactamase superfamily. Glyoxalase II family.</text>
</comment>
<evidence type="ECO:0000255" key="1">
    <source>
        <dbReference type="HAMAP-Rule" id="MF_01374"/>
    </source>
</evidence>
<gene>
    <name evidence="1" type="primary">gloB</name>
    <name type="ordered locus">NMC1973</name>
</gene>
<reference key="1">
    <citation type="journal article" date="2007" name="PLoS Genet.">
        <title>Meningococcal genetic variation mechanisms viewed through comparative analysis of serogroup C strain FAM18.</title>
        <authorList>
            <person name="Bentley S.D."/>
            <person name="Vernikos G.S."/>
            <person name="Snyder L.A.S."/>
            <person name="Churcher C."/>
            <person name="Arrowsmith C."/>
            <person name="Chillingworth T."/>
            <person name="Cronin A."/>
            <person name="Davis P.H."/>
            <person name="Holroyd N.E."/>
            <person name="Jagels K."/>
            <person name="Maddison M."/>
            <person name="Moule S."/>
            <person name="Rabbinowitsch E."/>
            <person name="Sharp S."/>
            <person name="Unwin L."/>
            <person name="Whitehead S."/>
            <person name="Quail M.A."/>
            <person name="Achtman M."/>
            <person name="Barrell B.G."/>
            <person name="Saunders N.J."/>
            <person name="Parkhill J."/>
        </authorList>
    </citation>
    <scope>NUCLEOTIDE SEQUENCE [LARGE SCALE GENOMIC DNA]</scope>
    <source>
        <strain>ATCC 700532 / DSM 15464 / FAM18</strain>
    </source>
</reference>
<proteinExistence type="inferred from homology"/>
<dbReference type="EC" id="3.1.2.6" evidence="1"/>
<dbReference type="EMBL" id="AM421808">
    <property type="protein sequence ID" value="CAM11132.1"/>
    <property type="molecule type" value="Genomic_DNA"/>
</dbReference>
<dbReference type="RefSeq" id="WP_002214906.1">
    <property type="nucleotide sequence ID" value="NC_008767.1"/>
</dbReference>
<dbReference type="SMR" id="A1KW76"/>
<dbReference type="KEGG" id="nmc:NMC1973"/>
<dbReference type="HOGENOM" id="CLU_030571_4_1_4"/>
<dbReference type="UniPathway" id="UPA00619">
    <property type="reaction ID" value="UER00676"/>
</dbReference>
<dbReference type="Proteomes" id="UP000002286">
    <property type="component" value="Chromosome"/>
</dbReference>
<dbReference type="GO" id="GO:0004416">
    <property type="term" value="F:hydroxyacylglutathione hydrolase activity"/>
    <property type="evidence" value="ECO:0007669"/>
    <property type="project" value="UniProtKB-UniRule"/>
</dbReference>
<dbReference type="GO" id="GO:0046872">
    <property type="term" value="F:metal ion binding"/>
    <property type="evidence" value="ECO:0007669"/>
    <property type="project" value="UniProtKB-KW"/>
</dbReference>
<dbReference type="GO" id="GO:0019243">
    <property type="term" value="P:methylglyoxal catabolic process to D-lactate via S-lactoyl-glutathione"/>
    <property type="evidence" value="ECO:0007669"/>
    <property type="project" value="InterPro"/>
</dbReference>
<dbReference type="CDD" id="cd07723">
    <property type="entry name" value="hydroxyacylglutathione_hydrolase_MBL-fold"/>
    <property type="match status" value="1"/>
</dbReference>
<dbReference type="Gene3D" id="3.60.15.10">
    <property type="entry name" value="Ribonuclease Z/Hydroxyacylglutathione hydrolase-like"/>
    <property type="match status" value="1"/>
</dbReference>
<dbReference type="HAMAP" id="MF_01374">
    <property type="entry name" value="Glyoxalase_2"/>
    <property type="match status" value="1"/>
</dbReference>
<dbReference type="InterPro" id="IPR035680">
    <property type="entry name" value="Clx_II_MBL"/>
</dbReference>
<dbReference type="InterPro" id="IPR050110">
    <property type="entry name" value="Glyoxalase_II_hydrolase"/>
</dbReference>
<dbReference type="InterPro" id="IPR032282">
    <property type="entry name" value="HAGH_C"/>
</dbReference>
<dbReference type="InterPro" id="IPR017782">
    <property type="entry name" value="Hydroxyacylglutathione_Hdrlase"/>
</dbReference>
<dbReference type="InterPro" id="IPR001279">
    <property type="entry name" value="Metallo-B-lactamas"/>
</dbReference>
<dbReference type="InterPro" id="IPR036866">
    <property type="entry name" value="RibonucZ/Hydroxyglut_hydro"/>
</dbReference>
<dbReference type="NCBIfam" id="TIGR03413">
    <property type="entry name" value="GSH_gloB"/>
    <property type="match status" value="1"/>
</dbReference>
<dbReference type="PANTHER" id="PTHR43705">
    <property type="entry name" value="HYDROXYACYLGLUTATHIONE HYDROLASE"/>
    <property type="match status" value="1"/>
</dbReference>
<dbReference type="PANTHER" id="PTHR43705:SF1">
    <property type="entry name" value="HYDROXYACYLGLUTATHIONE HYDROLASE GLOB"/>
    <property type="match status" value="1"/>
</dbReference>
<dbReference type="Pfam" id="PF16123">
    <property type="entry name" value="HAGH_C"/>
    <property type="match status" value="1"/>
</dbReference>
<dbReference type="Pfam" id="PF00753">
    <property type="entry name" value="Lactamase_B"/>
    <property type="match status" value="1"/>
</dbReference>
<dbReference type="SMART" id="SM00849">
    <property type="entry name" value="Lactamase_B"/>
    <property type="match status" value="1"/>
</dbReference>
<dbReference type="SUPFAM" id="SSF56281">
    <property type="entry name" value="Metallo-hydrolase/oxidoreductase"/>
    <property type="match status" value="1"/>
</dbReference>